<keyword id="KW-0007">Acetylation</keyword>
<keyword id="KW-0963">Cytoplasm</keyword>
<keyword id="KW-0343">GTPase activation</keyword>
<keyword id="KW-1017">Isopeptide bond</keyword>
<keyword id="KW-0597">Phosphoprotein</keyword>
<keyword id="KW-1185">Reference proteome</keyword>
<keyword id="KW-0832">Ubl conjugation</keyword>
<name>GDIR1_RAT</name>
<protein>
    <recommendedName>
        <fullName evidence="1">Rho GDP-dissociation inhibitor 1</fullName>
        <shortName evidence="1">Rho GDI 1</shortName>
    </recommendedName>
    <alternativeName>
        <fullName evidence="1">Rho-GDI alpha</fullName>
    </alternativeName>
</protein>
<proteinExistence type="evidence at protein level"/>
<sequence length="204" mass="23407">MAEQEPTAEQLAQIAAENEEDEHSVNYKPPAQKSIQEIQELDKDDESLRKYKEALLGRVAVSADPNVPNVIVTRLTLVCSTAPGPLELDLTGDLESFKKQSFVLKEGVEYRIKISFRVNREIVSGMKYIQHTYRKGVKIDKTDYMVGSYGPRAEEYEFLTPMEEAPKGMLARGSYNIKSRFTDDDKTDHLSWEWNLTIKKEWKD</sequence>
<evidence type="ECO:0000250" key="1">
    <source>
        <dbReference type="UniProtKB" id="P19803"/>
    </source>
</evidence>
<evidence type="ECO:0000250" key="2">
    <source>
        <dbReference type="UniProtKB" id="P52565"/>
    </source>
</evidence>
<evidence type="ECO:0000250" key="3">
    <source>
        <dbReference type="UniProtKB" id="Q99PT1"/>
    </source>
</evidence>
<evidence type="ECO:0000255" key="4"/>
<evidence type="ECO:0000256" key="5">
    <source>
        <dbReference type="SAM" id="MobiDB-lite"/>
    </source>
</evidence>
<evidence type="ECO:0000269" key="6">
    <source>
    </source>
</evidence>
<evidence type="ECO:0000269" key="7">
    <source>
    </source>
</evidence>
<evidence type="ECO:0000269" key="8">
    <source>
    </source>
</evidence>
<evidence type="ECO:0000269" key="9">
    <source>
    </source>
</evidence>
<evidence type="ECO:0000312" key="10">
    <source>
        <dbReference type="EMBL" id="AAH83817.1"/>
    </source>
</evidence>
<evidence type="ECO:0000312" key="11">
    <source>
        <dbReference type="RGD" id="1359547"/>
    </source>
</evidence>
<evidence type="ECO:0007744" key="12">
    <source>
    </source>
</evidence>
<organism>
    <name type="scientific">Rattus norvegicus</name>
    <name type="common">Rat</name>
    <dbReference type="NCBI Taxonomy" id="10116"/>
    <lineage>
        <taxon>Eukaryota</taxon>
        <taxon>Metazoa</taxon>
        <taxon>Chordata</taxon>
        <taxon>Craniata</taxon>
        <taxon>Vertebrata</taxon>
        <taxon>Euteleostomi</taxon>
        <taxon>Mammalia</taxon>
        <taxon>Eutheria</taxon>
        <taxon>Euarchontoglires</taxon>
        <taxon>Glires</taxon>
        <taxon>Rodentia</taxon>
        <taxon>Myomorpha</taxon>
        <taxon>Muroidea</taxon>
        <taxon>Muridae</taxon>
        <taxon>Murinae</taxon>
        <taxon>Rattus</taxon>
    </lineage>
</organism>
<feature type="initiator methionine" description="Removed" evidence="2">
    <location>
        <position position="1"/>
    </location>
</feature>
<feature type="chain" id="PRO_0000349124" description="Rho GDP-dissociation inhibitor 1" evidence="2">
    <location>
        <begin position="2"/>
        <end position="204"/>
    </location>
</feature>
<feature type="region of interest" description="Disordered" evidence="5">
    <location>
        <begin position="1"/>
        <end position="36"/>
    </location>
</feature>
<feature type="modified residue" description="N-acetylalanine" evidence="2">
    <location>
        <position position="2"/>
    </location>
</feature>
<feature type="modified residue" description="Phosphoserine" evidence="12">
    <location>
        <position position="34"/>
    </location>
</feature>
<feature type="modified residue" description="N6-acetyllysine" evidence="3">
    <location>
        <position position="43"/>
    </location>
</feature>
<feature type="modified residue" description="Phosphoserine" evidence="12">
    <location>
        <position position="47"/>
    </location>
</feature>
<feature type="modified residue" description="N6-acetyllysine" evidence="2">
    <location>
        <position position="105"/>
    </location>
</feature>
<feature type="modified residue" description="N6-acetyllysine" evidence="2">
    <location>
        <position position="127"/>
    </location>
</feature>
<feature type="modified residue" description="N6-acetyllysine; alternate" evidence="2">
    <location>
        <position position="141"/>
    </location>
</feature>
<feature type="modified residue" description="N6-succinyllysine; alternate" evidence="3">
    <location>
        <position position="141"/>
    </location>
</feature>
<feature type="modified residue" description="N6-acetyllysine" evidence="2">
    <location>
        <position position="178"/>
    </location>
</feature>
<feature type="cross-link" description="Glycyl lysine isopeptide (Lys-Gly) (interchain with G-Cter in SUMO1); alternate" evidence="2">
    <location>
        <position position="138"/>
    </location>
</feature>
<feature type="cross-link" description="Glycyl lysine isopeptide (Lys-Gly) (interchain with G-Cter in SUMO2); alternate" evidence="2">
    <location>
        <position position="138"/>
    </location>
</feature>
<feature type="cross-link" description="Glycyl lysine isopeptide (Lys-Gly) (interchain with G-Cter in SUMO1); alternate" evidence="2">
    <location>
        <position position="141"/>
    </location>
</feature>
<feature type="cross-link" description="Glycyl lysine isopeptide (Lys-Gly) (interchain with G-Cter in SUMO2); alternate" evidence="2">
    <location>
        <position position="141"/>
    </location>
</feature>
<reference evidence="10" key="1">
    <citation type="journal article" date="2004" name="Genome Res.">
        <title>The status, quality, and expansion of the NIH full-length cDNA project: the Mammalian Gene Collection (MGC).</title>
        <authorList>
            <consortium name="The MGC Project Team"/>
        </authorList>
    </citation>
    <scope>NUCLEOTIDE SEQUENCE [LARGE SCALE MRNA]</scope>
    <source>
        <strain evidence="6">Brown Norway</strain>
        <tissue evidence="10">Kidney</tissue>
    </source>
</reference>
<reference key="2">
    <citation type="journal article" date="2009" name="Proteomics">
        <title>Proteome profile of the mature rat olfactory bulb.</title>
        <authorList>
            <person name="Maurya D.K."/>
            <person name="Sundaram C.S."/>
            <person name="Bhargava P."/>
        </authorList>
    </citation>
    <scope>IDENTIFICATION BY MASS SPECTROMETRY</scope>
    <scope>SUBCELLULAR LOCATION</scope>
</reference>
<reference key="3">
    <citation type="journal article" date="2010" name="J. Biol. Chem.">
        <title>Semaphorin 5A and plexin-B3 inhibit human glioma cell motility through RhoGDIalpha-mediated inactivation of Rac1 GTPase.</title>
        <authorList>
            <person name="Li X."/>
            <person name="Lee A.Y."/>
        </authorList>
    </citation>
    <scope>FUNCTION</scope>
    <scope>INTERACTION WITH PLXNB3 AND RAC1</scope>
</reference>
<reference key="4">
    <citation type="journal article" date="2012" name="Nat. Commun.">
        <title>Quantitative maps of protein phosphorylation sites across 14 different rat organs and tissues.</title>
        <authorList>
            <person name="Lundby A."/>
            <person name="Secher A."/>
            <person name="Lage K."/>
            <person name="Nordsborg N.B."/>
            <person name="Dmytriyev A."/>
            <person name="Lundby C."/>
            <person name="Olsen J.V."/>
        </authorList>
    </citation>
    <scope>PHOSPHORYLATION [LARGE SCALE ANALYSIS] AT SER-34 AND SER-47</scope>
    <scope>IDENTIFICATION BY MASS SPECTROMETRY [LARGE SCALE ANALYSIS]</scope>
</reference>
<reference key="5">
    <citation type="journal article" date="2015" name="J. Clin. Invest.">
        <title>KANK deficiency leads to podocyte dysfunction and nephrotic syndrome.</title>
        <authorList>
            <person name="Gee H.Y."/>
            <person name="Zhang F."/>
            <person name="Ashraf S."/>
            <person name="Kohl S."/>
            <person name="Sadowski C.E."/>
            <person name="Vega-Warner V."/>
            <person name="Zhou W."/>
            <person name="Lovric S."/>
            <person name="Fang H."/>
            <person name="Nettleton M."/>
            <person name="Zhu J.Y."/>
            <person name="Hoefele J."/>
            <person name="Weber L.T."/>
            <person name="Podracka L."/>
            <person name="Boor A."/>
            <person name="Fehrenbach H."/>
            <person name="Innis J.W."/>
            <person name="Washburn J."/>
            <person name="Levy S."/>
            <person name="Lifton R.P."/>
            <person name="Otto E.A."/>
            <person name="Han Z."/>
            <person name="Hildebrandt F."/>
        </authorList>
    </citation>
    <scope>INTERACTION WITH KANK2</scope>
</reference>
<comment type="function">
    <text evidence="2 3 8">Controls Rho proteins homeostasis. Regulates the GDP/GTP exchange reaction of the Rho proteins by inhibiting the dissociation of GDP from them, and the subsequent binding of GTP to them. Retains Rho proteins such as CDC42, RAC1 and RHOA in an inactive cytosolic pool, regulating their stability and protecting them from degradation. Actively involved in the recycling and distribution of activated Rho GTPases in the cell, mediates extraction from membranes of both inactive and activated molecules due its exceptionally high affinity for prenylated forms. Through the modulation of Rho proteins, may play a role in cell motility regulation. In glioma cells, inhibits cell migration and invasion by mediating the signals of SEMA5A and PLXNB3 that lead to inactivation of RAC1.</text>
</comment>
<comment type="subunit">
    <text evidence="2 3 8 9">Monomer (By similarity). Interacts with FER (By similarity). Interacts with PLXNB3 (PubMed:20696765). Forms a heterodimer with RAC1 (PubMed:20696765). Interacts with RHOA, the affinity is increased by three orders of magnitude when RHOA is prenylated (By similarity). Interacts with PSMD10; the interaction increases ARHGDIA association with RHOA, leading to ARHGDIA-mediated inactivation of RHOA and ROCK and prolonged AKT activation (By similarity). Interacts with KANK2; the interaction is direct and may regulate the interaction of ARHGDIA with RHOA, RAC1 and CDC42 (PubMed:25961457). Interacts with RHOC (By similarity). Interacts with CDC42 (By similarity). Interacts with NGFR (via death domain); NGFR binding decreases the affinity for RHOA (By similarity).</text>
</comment>
<comment type="subcellular location">
    <subcellularLocation>
        <location evidence="7">Cytoplasm</location>
    </subcellularLocation>
</comment>
<comment type="similarity">
    <text evidence="4">Belongs to the Rho GDI family.</text>
</comment>
<dbReference type="EMBL" id="BC083817">
    <property type="protein sequence ID" value="AAH83817.1"/>
    <property type="molecule type" value="mRNA"/>
</dbReference>
<dbReference type="RefSeq" id="NP_001007006.1">
    <property type="nucleotide sequence ID" value="NM_001007005.1"/>
</dbReference>
<dbReference type="RefSeq" id="XP_006247959.1">
    <property type="nucleotide sequence ID" value="XM_006247897.5"/>
</dbReference>
<dbReference type="RefSeq" id="XP_006247960.1">
    <property type="nucleotide sequence ID" value="XM_006247898.4"/>
</dbReference>
<dbReference type="SMR" id="Q5XI73"/>
<dbReference type="BioGRID" id="262122">
    <property type="interactions" value="3"/>
</dbReference>
<dbReference type="FunCoup" id="Q5XI73">
    <property type="interactions" value="3016"/>
</dbReference>
<dbReference type="IntAct" id="Q5XI73">
    <property type="interactions" value="7"/>
</dbReference>
<dbReference type="MINT" id="Q5XI73"/>
<dbReference type="STRING" id="10116.ENSRNOP00000051840"/>
<dbReference type="GlyGen" id="Q5XI73">
    <property type="glycosylation" value="1 site, 1 O-linked glycan (1 site)"/>
</dbReference>
<dbReference type="iPTMnet" id="Q5XI73"/>
<dbReference type="PhosphoSitePlus" id="Q5XI73"/>
<dbReference type="SwissPalm" id="Q5XI73"/>
<dbReference type="jPOST" id="Q5XI73"/>
<dbReference type="PaxDb" id="10116-ENSRNOP00000051840"/>
<dbReference type="Ensembl" id="ENSRNOT00000114464.1">
    <property type="protein sequence ID" value="ENSRNOP00000080561.1"/>
    <property type="gene ID" value="ENSRNOG00000036688.3"/>
</dbReference>
<dbReference type="GeneID" id="360678"/>
<dbReference type="KEGG" id="rno:360678"/>
<dbReference type="AGR" id="RGD:1359547"/>
<dbReference type="CTD" id="396"/>
<dbReference type="RGD" id="1359547">
    <property type="gene designation" value="Arhgdia"/>
</dbReference>
<dbReference type="eggNOG" id="KOG3205">
    <property type="taxonomic scope" value="Eukaryota"/>
</dbReference>
<dbReference type="GeneTree" id="ENSGT00390000006233"/>
<dbReference type="HOGENOM" id="CLU_076228_1_1_1"/>
<dbReference type="InParanoid" id="Q5XI73"/>
<dbReference type="OMA" id="KRCYMEL"/>
<dbReference type="OrthoDB" id="1683373at2759"/>
<dbReference type="PhylomeDB" id="Q5XI73"/>
<dbReference type="TreeFam" id="TF105387"/>
<dbReference type="Reactome" id="R-RNO-193634">
    <property type="pathway name" value="Axonal growth inhibition (RHOA activation)"/>
</dbReference>
<dbReference type="Reactome" id="R-RNO-209563">
    <property type="pathway name" value="Axonal growth stimulation"/>
</dbReference>
<dbReference type="Reactome" id="R-RNO-8980692">
    <property type="pathway name" value="RHOA GTPase cycle"/>
</dbReference>
<dbReference type="Reactome" id="R-RNO-9013148">
    <property type="pathway name" value="CDC42 GTPase cycle"/>
</dbReference>
<dbReference type="Reactome" id="R-RNO-9013149">
    <property type="pathway name" value="RAC1 GTPase cycle"/>
</dbReference>
<dbReference type="Reactome" id="R-RNO-9013404">
    <property type="pathway name" value="RAC2 GTPase cycle"/>
</dbReference>
<dbReference type="Reactome" id="R-RNO-9013407">
    <property type="pathway name" value="RHOH GTPase cycle"/>
</dbReference>
<dbReference type="Reactome" id="R-RNO-9013408">
    <property type="pathway name" value="RHOG GTPase cycle"/>
</dbReference>
<dbReference type="PRO" id="PR:Q5XI73"/>
<dbReference type="Proteomes" id="UP000002494">
    <property type="component" value="Chromosome 10"/>
</dbReference>
<dbReference type="Bgee" id="ENSRNOG00000036688">
    <property type="expression patterns" value="Expressed in spleen and 19 other cell types or tissues"/>
</dbReference>
<dbReference type="GO" id="GO:0005829">
    <property type="term" value="C:cytosol"/>
    <property type="evidence" value="ECO:0000318"/>
    <property type="project" value="GO_Central"/>
</dbReference>
<dbReference type="GO" id="GO:0005615">
    <property type="term" value="C:extracellular space"/>
    <property type="evidence" value="ECO:0000314"/>
    <property type="project" value="RGD"/>
</dbReference>
<dbReference type="GO" id="GO:0001772">
    <property type="term" value="C:immunological synapse"/>
    <property type="evidence" value="ECO:0000266"/>
    <property type="project" value="RGD"/>
</dbReference>
<dbReference type="GO" id="GO:0016020">
    <property type="term" value="C:membrane"/>
    <property type="evidence" value="ECO:0000266"/>
    <property type="project" value="RGD"/>
</dbReference>
<dbReference type="GO" id="GO:0005634">
    <property type="term" value="C:nucleus"/>
    <property type="evidence" value="ECO:0000266"/>
    <property type="project" value="RGD"/>
</dbReference>
<dbReference type="GO" id="GO:0098685">
    <property type="term" value="C:Schaffer collateral - CA1 synapse"/>
    <property type="evidence" value="ECO:0000266"/>
    <property type="project" value="RGD"/>
</dbReference>
<dbReference type="GO" id="GO:0045202">
    <property type="term" value="C:synapse"/>
    <property type="evidence" value="ECO:0000314"/>
    <property type="project" value="SynGO"/>
</dbReference>
<dbReference type="GO" id="GO:0005504">
    <property type="term" value="F:fatty acid binding"/>
    <property type="evidence" value="ECO:0000314"/>
    <property type="project" value="RGD"/>
</dbReference>
<dbReference type="GO" id="GO:0005096">
    <property type="term" value="F:GTPase activator activity"/>
    <property type="evidence" value="ECO:0007669"/>
    <property type="project" value="UniProtKB-KW"/>
</dbReference>
<dbReference type="GO" id="GO:0051879">
    <property type="term" value="F:Hsp90 protein binding"/>
    <property type="evidence" value="ECO:0000314"/>
    <property type="project" value="RGD"/>
</dbReference>
<dbReference type="GO" id="GO:0019901">
    <property type="term" value="F:protein kinase binding"/>
    <property type="evidence" value="ECO:0000314"/>
    <property type="project" value="RGD"/>
</dbReference>
<dbReference type="GO" id="GO:0005094">
    <property type="term" value="F:Rho GDP-dissociation inhibitor activity"/>
    <property type="evidence" value="ECO:0000266"/>
    <property type="project" value="RGD"/>
</dbReference>
<dbReference type="GO" id="GO:0031267">
    <property type="term" value="F:small GTPase binding"/>
    <property type="evidence" value="ECO:0000353"/>
    <property type="project" value="RGD"/>
</dbReference>
<dbReference type="GO" id="GO:0071260">
    <property type="term" value="P:cellular response to mechanical stimulus"/>
    <property type="evidence" value="ECO:0000315"/>
    <property type="project" value="RGD"/>
</dbReference>
<dbReference type="GO" id="GO:0071461">
    <property type="term" value="P:cellular response to redox state"/>
    <property type="evidence" value="ECO:0000270"/>
    <property type="project" value="RGD"/>
</dbReference>
<dbReference type="GO" id="GO:0030336">
    <property type="term" value="P:negative regulation of cell migration"/>
    <property type="evidence" value="ECO:0000315"/>
    <property type="project" value="UniProtKB"/>
</dbReference>
<dbReference type="GO" id="GO:0008360">
    <property type="term" value="P:regulation of cell shape"/>
    <property type="evidence" value="ECO:0000315"/>
    <property type="project" value="RGD"/>
</dbReference>
<dbReference type="GO" id="GO:0032880">
    <property type="term" value="P:regulation of protein localization"/>
    <property type="evidence" value="ECO:0000266"/>
    <property type="project" value="RGD"/>
</dbReference>
<dbReference type="GO" id="GO:0035023">
    <property type="term" value="P:regulation of Rho protein signal transduction"/>
    <property type="evidence" value="ECO:0000266"/>
    <property type="project" value="RGD"/>
</dbReference>
<dbReference type="GO" id="GO:0098693">
    <property type="term" value="P:regulation of synaptic vesicle cycle"/>
    <property type="evidence" value="ECO:0000266"/>
    <property type="project" value="RGD"/>
</dbReference>
<dbReference type="GO" id="GO:0097338">
    <property type="term" value="P:response to clozapine"/>
    <property type="evidence" value="ECO:0000270"/>
    <property type="project" value="RGD"/>
</dbReference>
<dbReference type="GO" id="GO:0097336">
    <property type="term" value="P:response to risperidone"/>
    <property type="evidence" value="ECO:0000270"/>
    <property type="project" value="RGD"/>
</dbReference>
<dbReference type="GO" id="GO:0007266">
    <property type="term" value="P:Rho protein signal transduction"/>
    <property type="evidence" value="ECO:0000266"/>
    <property type="project" value="RGD"/>
</dbReference>
<dbReference type="GO" id="GO:0071526">
    <property type="term" value="P:semaphorin-plexin signaling pathway"/>
    <property type="evidence" value="ECO:0000250"/>
    <property type="project" value="UniProtKB"/>
</dbReference>
<dbReference type="FunFam" id="2.70.50.30:FF:000004">
    <property type="entry name" value="Rho GDP-dissociation inhibitor 1"/>
    <property type="match status" value="1"/>
</dbReference>
<dbReference type="Gene3D" id="2.70.50.30">
    <property type="entry name" value="Coagulation Factor XIII, subunit A, domain 1"/>
    <property type="match status" value="1"/>
</dbReference>
<dbReference type="InterPro" id="IPR014756">
    <property type="entry name" value="Ig_E-set"/>
</dbReference>
<dbReference type="InterPro" id="IPR000406">
    <property type="entry name" value="Rho_GDI"/>
</dbReference>
<dbReference type="InterPro" id="IPR024792">
    <property type="entry name" value="RhoGDI_dom_sf"/>
</dbReference>
<dbReference type="PANTHER" id="PTHR10980">
    <property type="entry name" value="RHO GDP-DISSOCIATION INHIBITOR"/>
    <property type="match status" value="1"/>
</dbReference>
<dbReference type="PANTHER" id="PTHR10980:SF9">
    <property type="entry name" value="RHO GDP-DISSOCIATION INHIBITOR 1"/>
    <property type="match status" value="1"/>
</dbReference>
<dbReference type="Pfam" id="PF02115">
    <property type="entry name" value="Rho_GDI"/>
    <property type="match status" value="1"/>
</dbReference>
<dbReference type="PRINTS" id="PR00492">
    <property type="entry name" value="RHOGDI"/>
</dbReference>
<dbReference type="SUPFAM" id="SSF81296">
    <property type="entry name" value="E set domains"/>
    <property type="match status" value="1"/>
</dbReference>
<gene>
    <name evidence="11" type="primary">Arhgdia</name>
</gene>
<accession>Q5XI73</accession>